<feature type="chain" id="PRO_0000094805" description="Dual specificity protein phosphatase 6">
    <location>
        <begin position="1"/>
        <end position="381"/>
    </location>
</feature>
<feature type="domain" description="Rhodanese" evidence="3">
    <location>
        <begin position="30"/>
        <end position="148"/>
    </location>
</feature>
<feature type="domain" description="Tyrosine-protein phosphatase" evidence="2">
    <location>
        <begin position="206"/>
        <end position="349"/>
    </location>
</feature>
<feature type="region of interest" description="Disordered" evidence="4">
    <location>
        <begin position="176"/>
        <end position="203"/>
    </location>
</feature>
<feature type="compositionally biased region" description="Polar residues" evidence="4">
    <location>
        <begin position="189"/>
        <end position="203"/>
    </location>
</feature>
<feature type="active site" description="Phosphocysteine intermediate" evidence="2">
    <location>
        <position position="293"/>
    </location>
</feature>
<feature type="sequence conflict" description="In Ref. 1; BAB26093." evidence="7" ref="1">
    <original>W</original>
    <variation>G</variation>
    <location>
        <position position="22"/>
    </location>
</feature>
<feature type="sequence conflict" description="In Ref. 1; BAB26093." evidence="7" ref="1">
    <original>L</original>
    <variation>F</variation>
    <location>
        <position position="34"/>
    </location>
</feature>
<dbReference type="EC" id="3.1.3.16"/>
<dbReference type="EC" id="3.1.3.48"/>
<dbReference type="EMBL" id="AK005062">
    <property type="protein sequence ID" value="BAB23786.1"/>
    <property type="molecule type" value="mRNA"/>
</dbReference>
<dbReference type="EMBL" id="AK009131">
    <property type="protein sequence ID" value="BAB26093.1"/>
    <property type="molecule type" value="mRNA"/>
</dbReference>
<dbReference type="EMBL" id="AK088468">
    <property type="protein sequence ID" value="BAC40372.1"/>
    <property type="molecule type" value="mRNA"/>
</dbReference>
<dbReference type="EMBL" id="AK088665">
    <property type="protein sequence ID" value="BAC40489.1"/>
    <property type="molecule type" value="mRNA"/>
</dbReference>
<dbReference type="EMBL" id="AK159146">
    <property type="protein sequence ID" value="BAE34853.1"/>
    <property type="molecule type" value="mRNA"/>
</dbReference>
<dbReference type="EMBL" id="AK159502">
    <property type="protein sequence ID" value="BAE35135.1"/>
    <property type="molecule type" value="mRNA"/>
</dbReference>
<dbReference type="EMBL" id="AK159900">
    <property type="protein sequence ID" value="BAE35465.1"/>
    <property type="molecule type" value="mRNA"/>
</dbReference>
<dbReference type="EMBL" id="BC003869">
    <property type="protein sequence ID" value="AAH03869.1"/>
    <property type="molecule type" value="mRNA"/>
</dbReference>
<dbReference type="CCDS" id="CCDS24147.1"/>
<dbReference type="RefSeq" id="NP_080544.1">
    <property type="nucleotide sequence ID" value="NM_026268.3"/>
</dbReference>
<dbReference type="SMR" id="Q9DBB1"/>
<dbReference type="BioGRID" id="212304">
    <property type="interactions" value="1"/>
</dbReference>
<dbReference type="CORUM" id="Q9DBB1"/>
<dbReference type="FunCoup" id="Q9DBB1">
    <property type="interactions" value="2341"/>
</dbReference>
<dbReference type="IntAct" id="Q9DBB1">
    <property type="interactions" value="1"/>
</dbReference>
<dbReference type="MINT" id="Q9DBB1"/>
<dbReference type="STRING" id="10090.ENSMUSP00000020118"/>
<dbReference type="iPTMnet" id="Q9DBB1"/>
<dbReference type="PhosphoSitePlus" id="Q9DBB1"/>
<dbReference type="PaxDb" id="10090-ENSMUSP00000020118"/>
<dbReference type="ProteomicsDB" id="279584"/>
<dbReference type="Antibodypedia" id="4315">
    <property type="antibodies" value="542 antibodies from 38 providers"/>
</dbReference>
<dbReference type="DNASU" id="67603"/>
<dbReference type="Ensembl" id="ENSMUST00000020118.5">
    <property type="protein sequence ID" value="ENSMUSP00000020118.5"/>
    <property type="gene ID" value="ENSMUSG00000019960.9"/>
</dbReference>
<dbReference type="GeneID" id="67603"/>
<dbReference type="KEGG" id="mmu:67603"/>
<dbReference type="UCSC" id="uc007gxk.2">
    <property type="organism name" value="mouse"/>
</dbReference>
<dbReference type="AGR" id="MGI:1914853"/>
<dbReference type="CTD" id="1848"/>
<dbReference type="MGI" id="MGI:1914853">
    <property type="gene designation" value="Dusp6"/>
</dbReference>
<dbReference type="VEuPathDB" id="HostDB:ENSMUSG00000019960"/>
<dbReference type="eggNOG" id="KOG1717">
    <property type="taxonomic scope" value="Eukaryota"/>
</dbReference>
<dbReference type="GeneTree" id="ENSGT00940000158342"/>
<dbReference type="HOGENOM" id="CLU_027074_0_0_1"/>
<dbReference type="InParanoid" id="Q9DBB1"/>
<dbReference type="OMA" id="GNDQRCI"/>
<dbReference type="OrthoDB" id="165342at2759"/>
<dbReference type="PhylomeDB" id="Q9DBB1"/>
<dbReference type="TreeFam" id="TF105122"/>
<dbReference type="Reactome" id="R-MMU-112409">
    <property type="pathway name" value="RAF-independent MAPK1/3 activation"/>
</dbReference>
<dbReference type="Reactome" id="R-MMU-202670">
    <property type="pathway name" value="ERKs are inactivated"/>
</dbReference>
<dbReference type="Reactome" id="R-MMU-5675221">
    <property type="pathway name" value="Negative regulation of MAPK pathway"/>
</dbReference>
<dbReference type="BioGRID-ORCS" id="67603">
    <property type="hits" value="2 hits in 78 CRISPR screens"/>
</dbReference>
<dbReference type="ChiTaRS" id="Dusp6">
    <property type="organism name" value="mouse"/>
</dbReference>
<dbReference type="PRO" id="PR:Q9DBB1"/>
<dbReference type="Proteomes" id="UP000000589">
    <property type="component" value="Chromosome 10"/>
</dbReference>
<dbReference type="RNAct" id="Q9DBB1">
    <property type="molecule type" value="protein"/>
</dbReference>
<dbReference type="Bgee" id="ENSMUSG00000019960">
    <property type="expression patterns" value="Expressed in metanephric ureteric bud and 323 other cell types or tissues"/>
</dbReference>
<dbReference type="ExpressionAtlas" id="Q9DBB1">
    <property type="expression patterns" value="baseline and differential"/>
</dbReference>
<dbReference type="GO" id="GO:0005829">
    <property type="term" value="C:cytosol"/>
    <property type="evidence" value="ECO:0007669"/>
    <property type="project" value="Ensembl"/>
</dbReference>
<dbReference type="GO" id="GO:0005654">
    <property type="term" value="C:nucleoplasm"/>
    <property type="evidence" value="ECO:0007669"/>
    <property type="project" value="Ensembl"/>
</dbReference>
<dbReference type="GO" id="GO:0017017">
    <property type="term" value="F:MAP kinase tyrosine/serine/threonine phosphatase activity"/>
    <property type="evidence" value="ECO:0007669"/>
    <property type="project" value="Ensembl"/>
</dbReference>
<dbReference type="GO" id="GO:0004721">
    <property type="term" value="F:phosphoprotein phosphatase activity"/>
    <property type="evidence" value="ECO:0000314"/>
    <property type="project" value="MGI"/>
</dbReference>
<dbReference type="GO" id="GO:0004722">
    <property type="term" value="F:protein serine/threonine phosphatase activity"/>
    <property type="evidence" value="ECO:0007669"/>
    <property type="project" value="UniProtKB-EC"/>
</dbReference>
<dbReference type="GO" id="GO:0004725">
    <property type="term" value="F:protein tyrosine phosphatase activity"/>
    <property type="evidence" value="ECO:0007669"/>
    <property type="project" value="UniProtKB-EC"/>
</dbReference>
<dbReference type="GO" id="GO:0030154">
    <property type="term" value="P:cell differentiation"/>
    <property type="evidence" value="ECO:0007669"/>
    <property type="project" value="Ensembl"/>
</dbReference>
<dbReference type="GO" id="GO:0070373">
    <property type="term" value="P:negative regulation of ERK1 and ERK2 cascade"/>
    <property type="evidence" value="ECO:0007669"/>
    <property type="project" value="Ensembl"/>
</dbReference>
<dbReference type="GO" id="GO:0043065">
    <property type="term" value="P:positive regulation of apoptotic process"/>
    <property type="evidence" value="ECO:0007669"/>
    <property type="project" value="Ensembl"/>
</dbReference>
<dbReference type="GO" id="GO:0060420">
    <property type="term" value="P:regulation of heart growth"/>
    <property type="evidence" value="ECO:0000315"/>
    <property type="project" value="MGI"/>
</dbReference>
<dbReference type="GO" id="GO:0070848">
    <property type="term" value="P:response to growth factor"/>
    <property type="evidence" value="ECO:0007669"/>
    <property type="project" value="Ensembl"/>
</dbReference>
<dbReference type="GO" id="GO:0051409">
    <property type="term" value="P:response to nitrosative stress"/>
    <property type="evidence" value="ECO:0007669"/>
    <property type="project" value="Ensembl"/>
</dbReference>
<dbReference type="GO" id="GO:0009410">
    <property type="term" value="P:response to xenobiotic stimulus"/>
    <property type="evidence" value="ECO:0007669"/>
    <property type="project" value="Ensembl"/>
</dbReference>
<dbReference type="CDD" id="cd01446">
    <property type="entry name" value="DSP_MapKP"/>
    <property type="match status" value="1"/>
</dbReference>
<dbReference type="CDD" id="cd14566">
    <property type="entry name" value="DSP_MKP_classII"/>
    <property type="match status" value="1"/>
</dbReference>
<dbReference type="FunFam" id="3.90.190.10:FF:000011">
    <property type="entry name" value="Dual specificity phosphatase 6"/>
    <property type="match status" value="1"/>
</dbReference>
<dbReference type="FunFam" id="3.40.250.10:FF:000011">
    <property type="entry name" value="Dual specificity phosphatase 7"/>
    <property type="match status" value="1"/>
</dbReference>
<dbReference type="Gene3D" id="3.90.190.10">
    <property type="entry name" value="Protein tyrosine phosphatase superfamily"/>
    <property type="match status" value="1"/>
</dbReference>
<dbReference type="Gene3D" id="3.40.250.10">
    <property type="entry name" value="Rhodanese-like domain"/>
    <property type="match status" value="1"/>
</dbReference>
<dbReference type="InterPro" id="IPR000340">
    <property type="entry name" value="Dual-sp_phosphatase_cat-dom"/>
</dbReference>
<dbReference type="InterPro" id="IPR008343">
    <property type="entry name" value="MKP"/>
</dbReference>
<dbReference type="InterPro" id="IPR029021">
    <property type="entry name" value="Prot-tyrosine_phosphatase-like"/>
</dbReference>
<dbReference type="InterPro" id="IPR001763">
    <property type="entry name" value="Rhodanese-like_dom"/>
</dbReference>
<dbReference type="InterPro" id="IPR036873">
    <property type="entry name" value="Rhodanese-like_dom_sf"/>
</dbReference>
<dbReference type="InterPro" id="IPR000387">
    <property type="entry name" value="Tyr_Pase_dom"/>
</dbReference>
<dbReference type="InterPro" id="IPR020422">
    <property type="entry name" value="TYR_PHOSPHATASE_DUAL_dom"/>
</dbReference>
<dbReference type="PANTHER" id="PTHR10159">
    <property type="entry name" value="DUAL SPECIFICITY PROTEIN PHOSPHATASE"/>
    <property type="match status" value="1"/>
</dbReference>
<dbReference type="PANTHER" id="PTHR10159:SF45">
    <property type="entry name" value="DUAL SPECIFICITY PROTEIN PHOSPHATASE 6"/>
    <property type="match status" value="1"/>
</dbReference>
<dbReference type="Pfam" id="PF00782">
    <property type="entry name" value="DSPc"/>
    <property type="match status" value="1"/>
</dbReference>
<dbReference type="Pfam" id="PF00581">
    <property type="entry name" value="Rhodanese"/>
    <property type="match status" value="1"/>
</dbReference>
<dbReference type="PIRSF" id="PIRSF000939">
    <property type="entry name" value="MAPK_Ptase"/>
    <property type="match status" value="1"/>
</dbReference>
<dbReference type="PRINTS" id="PR01764">
    <property type="entry name" value="MAPKPHPHTASE"/>
</dbReference>
<dbReference type="SMART" id="SM00195">
    <property type="entry name" value="DSPc"/>
    <property type="match status" value="1"/>
</dbReference>
<dbReference type="SMART" id="SM00450">
    <property type="entry name" value="RHOD"/>
    <property type="match status" value="1"/>
</dbReference>
<dbReference type="SUPFAM" id="SSF52799">
    <property type="entry name" value="(Phosphotyrosine protein) phosphatases II"/>
    <property type="match status" value="1"/>
</dbReference>
<dbReference type="SUPFAM" id="SSF52821">
    <property type="entry name" value="Rhodanese/Cell cycle control phosphatase"/>
    <property type="match status" value="1"/>
</dbReference>
<dbReference type="PROSITE" id="PS50206">
    <property type="entry name" value="RHODANESE_3"/>
    <property type="match status" value="1"/>
</dbReference>
<dbReference type="PROSITE" id="PS50056">
    <property type="entry name" value="TYR_PHOSPHATASE_2"/>
    <property type="match status" value="1"/>
</dbReference>
<dbReference type="PROSITE" id="PS50054">
    <property type="entry name" value="TYR_PHOSPHATASE_DUAL"/>
    <property type="match status" value="1"/>
</dbReference>
<evidence type="ECO:0000250" key="1">
    <source>
        <dbReference type="UniProtKB" id="Q16828"/>
    </source>
</evidence>
<evidence type="ECO:0000255" key="2">
    <source>
        <dbReference type="PROSITE-ProRule" id="PRU00160"/>
    </source>
</evidence>
<evidence type="ECO:0000255" key="3">
    <source>
        <dbReference type="PROSITE-ProRule" id="PRU00173"/>
    </source>
</evidence>
<evidence type="ECO:0000256" key="4">
    <source>
        <dbReference type="SAM" id="MobiDB-lite"/>
    </source>
</evidence>
<evidence type="ECO:0000269" key="5">
    <source>
    </source>
</evidence>
<evidence type="ECO:0000269" key="6">
    <source>
    </source>
</evidence>
<evidence type="ECO:0000305" key="7"/>
<reference key="1">
    <citation type="journal article" date="2005" name="Science">
        <title>The transcriptional landscape of the mammalian genome.</title>
        <authorList>
            <person name="Carninci P."/>
            <person name="Kasukawa T."/>
            <person name="Katayama S."/>
            <person name="Gough J."/>
            <person name="Frith M.C."/>
            <person name="Maeda N."/>
            <person name="Oyama R."/>
            <person name="Ravasi T."/>
            <person name="Lenhard B."/>
            <person name="Wells C."/>
            <person name="Kodzius R."/>
            <person name="Shimokawa K."/>
            <person name="Bajic V.B."/>
            <person name="Brenner S.E."/>
            <person name="Batalov S."/>
            <person name="Forrest A.R."/>
            <person name="Zavolan M."/>
            <person name="Davis M.J."/>
            <person name="Wilming L.G."/>
            <person name="Aidinis V."/>
            <person name="Allen J.E."/>
            <person name="Ambesi-Impiombato A."/>
            <person name="Apweiler R."/>
            <person name="Aturaliya R.N."/>
            <person name="Bailey T.L."/>
            <person name="Bansal M."/>
            <person name="Baxter L."/>
            <person name="Beisel K.W."/>
            <person name="Bersano T."/>
            <person name="Bono H."/>
            <person name="Chalk A.M."/>
            <person name="Chiu K.P."/>
            <person name="Choudhary V."/>
            <person name="Christoffels A."/>
            <person name="Clutterbuck D.R."/>
            <person name="Crowe M.L."/>
            <person name="Dalla E."/>
            <person name="Dalrymple B.P."/>
            <person name="de Bono B."/>
            <person name="Della Gatta G."/>
            <person name="di Bernardo D."/>
            <person name="Down T."/>
            <person name="Engstrom P."/>
            <person name="Fagiolini M."/>
            <person name="Faulkner G."/>
            <person name="Fletcher C.F."/>
            <person name="Fukushima T."/>
            <person name="Furuno M."/>
            <person name="Futaki S."/>
            <person name="Gariboldi M."/>
            <person name="Georgii-Hemming P."/>
            <person name="Gingeras T.R."/>
            <person name="Gojobori T."/>
            <person name="Green R.E."/>
            <person name="Gustincich S."/>
            <person name="Harbers M."/>
            <person name="Hayashi Y."/>
            <person name="Hensch T.K."/>
            <person name="Hirokawa N."/>
            <person name="Hill D."/>
            <person name="Huminiecki L."/>
            <person name="Iacono M."/>
            <person name="Ikeo K."/>
            <person name="Iwama A."/>
            <person name="Ishikawa T."/>
            <person name="Jakt M."/>
            <person name="Kanapin A."/>
            <person name="Katoh M."/>
            <person name="Kawasawa Y."/>
            <person name="Kelso J."/>
            <person name="Kitamura H."/>
            <person name="Kitano H."/>
            <person name="Kollias G."/>
            <person name="Krishnan S.P."/>
            <person name="Kruger A."/>
            <person name="Kummerfeld S.K."/>
            <person name="Kurochkin I.V."/>
            <person name="Lareau L.F."/>
            <person name="Lazarevic D."/>
            <person name="Lipovich L."/>
            <person name="Liu J."/>
            <person name="Liuni S."/>
            <person name="McWilliam S."/>
            <person name="Madan Babu M."/>
            <person name="Madera M."/>
            <person name="Marchionni L."/>
            <person name="Matsuda H."/>
            <person name="Matsuzawa S."/>
            <person name="Miki H."/>
            <person name="Mignone F."/>
            <person name="Miyake S."/>
            <person name="Morris K."/>
            <person name="Mottagui-Tabar S."/>
            <person name="Mulder N."/>
            <person name="Nakano N."/>
            <person name="Nakauchi H."/>
            <person name="Ng P."/>
            <person name="Nilsson R."/>
            <person name="Nishiguchi S."/>
            <person name="Nishikawa S."/>
            <person name="Nori F."/>
            <person name="Ohara O."/>
            <person name="Okazaki Y."/>
            <person name="Orlando V."/>
            <person name="Pang K.C."/>
            <person name="Pavan W.J."/>
            <person name="Pavesi G."/>
            <person name="Pesole G."/>
            <person name="Petrovsky N."/>
            <person name="Piazza S."/>
            <person name="Reed J."/>
            <person name="Reid J.F."/>
            <person name="Ring B.Z."/>
            <person name="Ringwald M."/>
            <person name="Rost B."/>
            <person name="Ruan Y."/>
            <person name="Salzberg S.L."/>
            <person name="Sandelin A."/>
            <person name="Schneider C."/>
            <person name="Schoenbach C."/>
            <person name="Sekiguchi K."/>
            <person name="Semple C.A."/>
            <person name="Seno S."/>
            <person name="Sessa L."/>
            <person name="Sheng Y."/>
            <person name="Shibata Y."/>
            <person name="Shimada H."/>
            <person name="Shimada K."/>
            <person name="Silva D."/>
            <person name="Sinclair B."/>
            <person name="Sperling S."/>
            <person name="Stupka E."/>
            <person name="Sugiura K."/>
            <person name="Sultana R."/>
            <person name="Takenaka Y."/>
            <person name="Taki K."/>
            <person name="Tammoja K."/>
            <person name="Tan S.L."/>
            <person name="Tang S."/>
            <person name="Taylor M.S."/>
            <person name="Tegner J."/>
            <person name="Teichmann S.A."/>
            <person name="Ueda H.R."/>
            <person name="van Nimwegen E."/>
            <person name="Verardo R."/>
            <person name="Wei C.L."/>
            <person name="Yagi K."/>
            <person name="Yamanishi H."/>
            <person name="Zabarovsky E."/>
            <person name="Zhu S."/>
            <person name="Zimmer A."/>
            <person name="Hide W."/>
            <person name="Bult C."/>
            <person name="Grimmond S.M."/>
            <person name="Teasdale R.D."/>
            <person name="Liu E.T."/>
            <person name="Brusic V."/>
            <person name="Quackenbush J."/>
            <person name="Wahlestedt C."/>
            <person name="Mattick J.S."/>
            <person name="Hume D.A."/>
            <person name="Kai C."/>
            <person name="Sasaki D."/>
            <person name="Tomaru Y."/>
            <person name="Fukuda S."/>
            <person name="Kanamori-Katayama M."/>
            <person name="Suzuki M."/>
            <person name="Aoki J."/>
            <person name="Arakawa T."/>
            <person name="Iida J."/>
            <person name="Imamura K."/>
            <person name="Itoh M."/>
            <person name="Kato T."/>
            <person name="Kawaji H."/>
            <person name="Kawagashira N."/>
            <person name="Kawashima T."/>
            <person name="Kojima M."/>
            <person name="Kondo S."/>
            <person name="Konno H."/>
            <person name="Nakano K."/>
            <person name="Ninomiya N."/>
            <person name="Nishio T."/>
            <person name="Okada M."/>
            <person name="Plessy C."/>
            <person name="Shibata K."/>
            <person name="Shiraki T."/>
            <person name="Suzuki S."/>
            <person name="Tagami M."/>
            <person name="Waki K."/>
            <person name="Watahiki A."/>
            <person name="Okamura-Oho Y."/>
            <person name="Suzuki H."/>
            <person name="Kawai J."/>
            <person name="Hayashizaki Y."/>
        </authorList>
    </citation>
    <scope>NUCLEOTIDE SEQUENCE [LARGE SCALE MRNA]</scope>
    <source>
        <strain>C57BL/6J</strain>
        <strain>NOD</strain>
        <tissue>Liver</tissue>
        <tissue>Thymus</tissue>
        <tissue>Tongue</tissue>
    </source>
</reference>
<reference key="2">
    <citation type="journal article" date="2004" name="Genome Res.">
        <title>The status, quality, and expansion of the NIH full-length cDNA project: the Mammalian Gene Collection (MGC).</title>
        <authorList>
            <consortium name="The MGC Project Team"/>
        </authorList>
    </citation>
    <scope>NUCLEOTIDE SEQUENCE [LARGE SCALE MRNA]</scope>
</reference>
<reference key="3">
    <citation type="journal article" date="2013" name="J. Neurosci.">
        <title>Spinal mitogen-activated protein kinase phosphatase-3 (MKP-3) is necessary for the normal resolution of mechanical allodynia in a mouse model of acute postoperative pain.</title>
        <authorList>
            <person name="Saha M."/>
            <person name="Skopelja S."/>
            <person name="Martinez E."/>
            <person name="Alvarez D.L."/>
            <person name="Liponis B.S."/>
            <person name="Romero-Sandoval E.A."/>
        </authorList>
    </citation>
    <scope>FUNCTION</scope>
    <scope>DISRUPTION PHENOTYPE</scope>
</reference>
<reference key="4">
    <citation type="journal article" date="2017" name="J. Pain Res.">
        <title>Mitogen-activated protein kinase phosphatase-3 (MKP-3) in the surgical wound is necessary for the resolution of postoperative pain in mice.</title>
        <authorList>
            <person name="Skopelja-Gardner S."/>
            <person name="Saha M."/>
            <person name="Alvarado-Vazquez P.A."/>
            <person name="Liponis B.S."/>
            <person name="Martinez E."/>
            <person name="Romero-Sandoval E.A."/>
        </authorList>
    </citation>
    <scope>FUNCTION</scope>
    <scope>INDUCTION</scope>
    <scope>DISRUPTION PHENOTYPE</scope>
</reference>
<name>DUS6_MOUSE</name>
<accession>Q9DBB1</accession>
<accession>Q542I5</accession>
<accession>Q9D7L4</accession>
<keyword id="KW-0963">Cytoplasm</keyword>
<keyword id="KW-0378">Hydrolase</keyword>
<keyword id="KW-0904">Protein phosphatase</keyword>
<keyword id="KW-1185">Reference proteome</keyword>
<keyword id="KW-0832">Ubl conjugation</keyword>
<protein>
    <recommendedName>
        <fullName>Dual specificity protein phosphatase 6</fullName>
        <ecNumber>3.1.3.16</ecNumber>
        <ecNumber>3.1.3.48</ecNumber>
    </recommendedName>
    <alternativeName>
        <fullName>Mitogen-activated protein kinase phosphatase 3</fullName>
        <shortName>MAP kinase phosphatase 3</shortName>
        <shortName>MKP-3</shortName>
    </alternativeName>
</protein>
<sequence>MIDTLRPVPFASEMAICKTVSWLNEQLELGNERLLLMDCRPQELYESSHIESAINVAIPGIMLRRLQKGNLPVRALFTRCEDRDRFTRRCGTDTVVLYDENSSDWNENTGGESVLGLLLKKLKDEGCRAFYLEGGFSKFQAEFALHCETNLDGSCSSSSPPLPVLGLGGLRISSDSSSDIESDLDRDPNSATDSDGSPLSNSQPSFPVEILPFLYLGCAKDSTNLDVLEEFGIKYILNVTPNLPNLFENAGEFKYKQIPISDHWSQNLSQFFPEAISFIDEARGKNCGVLVHCLAGISRSVTVTVAYLMQKLNLSMNDAYDIVKMKKSNISPNFNFMGQLLDFERTLGLSSPCDNRVPTPQLYFTTPSNQNVYQVDSLQST</sequence>
<proteinExistence type="evidence at protein level"/>
<comment type="function">
    <text evidence="1 5 6">Dual specificity protein phosphatase, which mediates dephosphorylation and inactivation of MAP kinases. Has a specificity for the ERK family (By similarity). Plays an important role in alleviating acute postoperative pain (PubMed:24155322, PubMed:28405172). Necessary for the normal dephosphorylation of the long-lasting phosphorylated forms of spinal MAPK1/3 and MAP kinase p38 induced by peripheral surgery, which drives the resolution of acute postoperative allodynia (PubMed:24155322). Also important for dephosphorylation of MAPK1/3 in local wound tissue, which further contributes to resolution of acute pain (PubMed:28405172).</text>
</comment>
<comment type="catalytic activity">
    <reaction>
        <text>O-phospho-L-tyrosyl-[protein] + H2O = L-tyrosyl-[protein] + phosphate</text>
        <dbReference type="Rhea" id="RHEA:10684"/>
        <dbReference type="Rhea" id="RHEA-COMP:10136"/>
        <dbReference type="Rhea" id="RHEA-COMP:20101"/>
        <dbReference type="ChEBI" id="CHEBI:15377"/>
        <dbReference type="ChEBI" id="CHEBI:43474"/>
        <dbReference type="ChEBI" id="CHEBI:46858"/>
        <dbReference type="ChEBI" id="CHEBI:61978"/>
        <dbReference type="EC" id="3.1.3.48"/>
    </reaction>
</comment>
<comment type="catalytic activity">
    <reaction>
        <text>O-phospho-L-seryl-[protein] + H2O = L-seryl-[protein] + phosphate</text>
        <dbReference type="Rhea" id="RHEA:20629"/>
        <dbReference type="Rhea" id="RHEA-COMP:9863"/>
        <dbReference type="Rhea" id="RHEA-COMP:11604"/>
        <dbReference type="ChEBI" id="CHEBI:15377"/>
        <dbReference type="ChEBI" id="CHEBI:29999"/>
        <dbReference type="ChEBI" id="CHEBI:43474"/>
        <dbReference type="ChEBI" id="CHEBI:83421"/>
        <dbReference type="EC" id="3.1.3.16"/>
    </reaction>
</comment>
<comment type="catalytic activity">
    <reaction>
        <text>O-phospho-L-threonyl-[protein] + H2O = L-threonyl-[protein] + phosphate</text>
        <dbReference type="Rhea" id="RHEA:47004"/>
        <dbReference type="Rhea" id="RHEA-COMP:11060"/>
        <dbReference type="Rhea" id="RHEA-COMP:11605"/>
        <dbReference type="ChEBI" id="CHEBI:15377"/>
        <dbReference type="ChEBI" id="CHEBI:30013"/>
        <dbReference type="ChEBI" id="CHEBI:43474"/>
        <dbReference type="ChEBI" id="CHEBI:61977"/>
        <dbReference type="EC" id="3.1.3.16"/>
    </reaction>
</comment>
<comment type="subunit">
    <text evidence="1">Interacts with MAPK1/ERK2.</text>
</comment>
<comment type="interaction">
    <interactant intactId="EBI-7812384">
        <id>Q9DBB1</id>
    </interactant>
    <interactant intactId="EBI-397697">
        <id>P63085</id>
        <label>Mapk1</label>
    </interactant>
    <organismsDiffer>false</organismsDiffer>
    <experiments>2</experiments>
</comment>
<comment type="subcellular location">
    <subcellularLocation>
        <location evidence="1">Cytoplasm</location>
    </subcellularLocation>
</comment>
<comment type="induction">
    <text evidence="6">Up-regulated in local wound tissue 5-7 days after surgical incision.</text>
</comment>
<comment type="PTM">
    <text evidence="1">Ubiquitinated by the SCF(FBXO31) complex, leading to its proteasomal degradation.</text>
</comment>
<comment type="disruption phenotype">
    <text evidence="5 6">Mice exhibit a persistent state of mechanical allodynia following plantar incision (PubMed:24155322, PubMed:28405172). This allodynia phenotype is concurrent with long-lasting spinal phosphorylation of MAPK1/3 and MAP kinase p38 (PubMed:24155322). Tissue at the local incision site also shows prolonged expression of phosphorylated MAPK1/3 which persists through to post-operative day 12, although levels of phosphorylated MAP kinase p38 are normal (PubMed:28405172).</text>
</comment>
<comment type="similarity">
    <text evidence="7">Belongs to the protein-tyrosine phosphatase family. Non-receptor class dual specificity subfamily.</text>
</comment>
<organism>
    <name type="scientific">Mus musculus</name>
    <name type="common">Mouse</name>
    <dbReference type="NCBI Taxonomy" id="10090"/>
    <lineage>
        <taxon>Eukaryota</taxon>
        <taxon>Metazoa</taxon>
        <taxon>Chordata</taxon>
        <taxon>Craniata</taxon>
        <taxon>Vertebrata</taxon>
        <taxon>Euteleostomi</taxon>
        <taxon>Mammalia</taxon>
        <taxon>Eutheria</taxon>
        <taxon>Euarchontoglires</taxon>
        <taxon>Glires</taxon>
        <taxon>Rodentia</taxon>
        <taxon>Myomorpha</taxon>
        <taxon>Muroidea</taxon>
        <taxon>Muridae</taxon>
        <taxon>Murinae</taxon>
        <taxon>Mus</taxon>
        <taxon>Mus</taxon>
    </lineage>
</organism>
<gene>
    <name type="primary">Dusp6</name>
    <name type="synonym">Mkp3</name>
</gene>